<comment type="function">
    <text evidence="1">Specifically methylates guanosine-37 in various tRNAs.</text>
</comment>
<comment type="catalytic activity">
    <reaction evidence="1">
        <text>guanosine(37) in tRNA + S-adenosyl-L-methionine = N(1)-methylguanosine(37) in tRNA + S-adenosyl-L-homocysteine + H(+)</text>
        <dbReference type="Rhea" id="RHEA:36899"/>
        <dbReference type="Rhea" id="RHEA-COMP:10145"/>
        <dbReference type="Rhea" id="RHEA-COMP:10147"/>
        <dbReference type="ChEBI" id="CHEBI:15378"/>
        <dbReference type="ChEBI" id="CHEBI:57856"/>
        <dbReference type="ChEBI" id="CHEBI:59789"/>
        <dbReference type="ChEBI" id="CHEBI:73542"/>
        <dbReference type="ChEBI" id="CHEBI:74269"/>
        <dbReference type="EC" id="2.1.1.228"/>
    </reaction>
</comment>
<comment type="subunit">
    <text evidence="1">Homodimer.</text>
</comment>
<comment type="subcellular location">
    <subcellularLocation>
        <location evidence="1">Cytoplasm</location>
    </subcellularLocation>
</comment>
<comment type="similarity">
    <text evidence="1">Belongs to the RNA methyltransferase TrmD family.</text>
</comment>
<dbReference type="EC" id="2.1.1.228" evidence="1"/>
<dbReference type="EMBL" id="AE016823">
    <property type="protein sequence ID" value="AAS70154.1"/>
    <property type="molecule type" value="Genomic_DNA"/>
</dbReference>
<dbReference type="RefSeq" id="WP_000671159.1">
    <property type="nucleotide sequence ID" value="NC_005823.1"/>
</dbReference>
<dbReference type="SMR" id="Q72S28"/>
<dbReference type="GeneID" id="61144857"/>
<dbReference type="KEGG" id="lic:LIC_11558"/>
<dbReference type="HOGENOM" id="CLU_047363_0_1_12"/>
<dbReference type="Proteomes" id="UP000007037">
    <property type="component" value="Chromosome I"/>
</dbReference>
<dbReference type="GO" id="GO:0005829">
    <property type="term" value="C:cytosol"/>
    <property type="evidence" value="ECO:0007669"/>
    <property type="project" value="TreeGrafter"/>
</dbReference>
<dbReference type="GO" id="GO:0052906">
    <property type="term" value="F:tRNA (guanine(37)-N1)-methyltransferase activity"/>
    <property type="evidence" value="ECO:0007669"/>
    <property type="project" value="UniProtKB-UniRule"/>
</dbReference>
<dbReference type="GO" id="GO:0002939">
    <property type="term" value="P:tRNA N1-guanine methylation"/>
    <property type="evidence" value="ECO:0007669"/>
    <property type="project" value="TreeGrafter"/>
</dbReference>
<dbReference type="CDD" id="cd18080">
    <property type="entry name" value="TrmD-like"/>
    <property type="match status" value="1"/>
</dbReference>
<dbReference type="Gene3D" id="3.40.1280.10">
    <property type="match status" value="1"/>
</dbReference>
<dbReference type="Gene3D" id="1.10.1270.20">
    <property type="entry name" value="tRNA(m1g37)methyltransferase, domain 2"/>
    <property type="match status" value="1"/>
</dbReference>
<dbReference type="HAMAP" id="MF_00605">
    <property type="entry name" value="TrmD"/>
    <property type="match status" value="1"/>
</dbReference>
<dbReference type="InterPro" id="IPR029028">
    <property type="entry name" value="Alpha/beta_knot_MTases"/>
</dbReference>
<dbReference type="InterPro" id="IPR023148">
    <property type="entry name" value="tRNA_m1G_MeTrfase_C_sf"/>
</dbReference>
<dbReference type="InterPro" id="IPR002649">
    <property type="entry name" value="tRNA_m1G_MeTrfase_TrmD"/>
</dbReference>
<dbReference type="InterPro" id="IPR029026">
    <property type="entry name" value="tRNA_m1G_MTases_N"/>
</dbReference>
<dbReference type="InterPro" id="IPR016009">
    <property type="entry name" value="tRNA_MeTrfase_TRMD/TRM10"/>
</dbReference>
<dbReference type="NCBIfam" id="NF000648">
    <property type="entry name" value="PRK00026.1"/>
    <property type="match status" value="1"/>
</dbReference>
<dbReference type="NCBIfam" id="TIGR00088">
    <property type="entry name" value="trmD"/>
    <property type="match status" value="1"/>
</dbReference>
<dbReference type="PANTHER" id="PTHR46417">
    <property type="entry name" value="TRNA (GUANINE-N(1)-)-METHYLTRANSFERASE"/>
    <property type="match status" value="1"/>
</dbReference>
<dbReference type="PANTHER" id="PTHR46417:SF1">
    <property type="entry name" value="TRNA (GUANINE-N(1)-)-METHYLTRANSFERASE"/>
    <property type="match status" value="1"/>
</dbReference>
<dbReference type="Pfam" id="PF01746">
    <property type="entry name" value="tRNA_m1G_MT"/>
    <property type="match status" value="1"/>
</dbReference>
<dbReference type="PIRSF" id="PIRSF000386">
    <property type="entry name" value="tRNA_mtase"/>
    <property type="match status" value="1"/>
</dbReference>
<dbReference type="SUPFAM" id="SSF75217">
    <property type="entry name" value="alpha/beta knot"/>
    <property type="match status" value="1"/>
</dbReference>
<proteinExistence type="inferred from homology"/>
<accession>Q72S28</accession>
<name>TRMD_LEPIC</name>
<protein>
    <recommendedName>
        <fullName evidence="1">tRNA (guanine-N(1)-)-methyltransferase</fullName>
        <ecNumber evidence="1">2.1.1.228</ecNumber>
    </recommendedName>
    <alternativeName>
        <fullName evidence="1">M1G-methyltransferase</fullName>
    </alternativeName>
    <alternativeName>
        <fullName evidence="1">tRNA [GM37] methyltransferase</fullName>
    </alternativeName>
</protein>
<organism>
    <name type="scientific">Leptospira interrogans serogroup Icterohaemorrhagiae serovar copenhageni (strain Fiocruz L1-130)</name>
    <dbReference type="NCBI Taxonomy" id="267671"/>
    <lineage>
        <taxon>Bacteria</taxon>
        <taxon>Pseudomonadati</taxon>
        <taxon>Spirochaetota</taxon>
        <taxon>Spirochaetia</taxon>
        <taxon>Leptospirales</taxon>
        <taxon>Leptospiraceae</taxon>
        <taxon>Leptospira</taxon>
    </lineage>
</organism>
<evidence type="ECO:0000255" key="1">
    <source>
        <dbReference type="HAMAP-Rule" id="MF_00605"/>
    </source>
</evidence>
<reference key="1">
    <citation type="journal article" date="2004" name="J. Bacteriol.">
        <title>Comparative genomics of two Leptospira interrogans serovars reveals novel insights into physiology and pathogenesis.</title>
        <authorList>
            <person name="Nascimento A.L.T.O."/>
            <person name="Ko A.I."/>
            <person name="Martins E.A.L."/>
            <person name="Monteiro-Vitorello C.B."/>
            <person name="Ho P.L."/>
            <person name="Haake D.A."/>
            <person name="Verjovski-Almeida S."/>
            <person name="Hartskeerl R.A."/>
            <person name="Marques M.V."/>
            <person name="Oliveira M.C."/>
            <person name="Menck C.F.M."/>
            <person name="Leite L.C.C."/>
            <person name="Carrer H."/>
            <person name="Coutinho L.L."/>
            <person name="Degrave W.M."/>
            <person name="Dellagostin O.A."/>
            <person name="El-Dorry H."/>
            <person name="Ferro E.S."/>
            <person name="Ferro M.I.T."/>
            <person name="Furlan L.R."/>
            <person name="Gamberini M."/>
            <person name="Giglioti E.A."/>
            <person name="Goes-Neto A."/>
            <person name="Goldman G.H."/>
            <person name="Goldman M.H.S."/>
            <person name="Harakava R."/>
            <person name="Jeronimo S.M.B."/>
            <person name="Junqueira-de-Azevedo I.L.M."/>
            <person name="Kimura E.T."/>
            <person name="Kuramae E.E."/>
            <person name="Lemos E.G.M."/>
            <person name="Lemos M.V.F."/>
            <person name="Marino C.L."/>
            <person name="Nunes L.R."/>
            <person name="de Oliveira R.C."/>
            <person name="Pereira G.G."/>
            <person name="Reis M.S."/>
            <person name="Schriefer A."/>
            <person name="Siqueira W.J."/>
            <person name="Sommer P."/>
            <person name="Tsai S.M."/>
            <person name="Simpson A.J.G."/>
            <person name="Ferro J.A."/>
            <person name="Camargo L.E.A."/>
            <person name="Kitajima J.P."/>
            <person name="Setubal J.C."/>
            <person name="Van Sluys M.A."/>
        </authorList>
    </citation>
    <scope>NUCLEOTIDE SEQUENCE [LARGE SCALE GENOMIC DNA]</scope>
    <source>
        <strain>Fiocruz L1-130</strain>
    </source>
</reference>
<gene>
    <name evidence="1" type="primary">trmD</name>
    <name type="ordered locus">LIC_11558</name>
</gene>
<sequence length="231" mass="25594">MKFNFITLFPDKIQSYFSEGLQQKAIESGVFSVNIIQLRNFSGNKHNRVDDTIYGGGPGMLLRVEPIHKAILSLGEEKGIVILTSPSGIPFNQSIAMDLKKGGKPLTFISGYYEGVDHRVTEHLVDMEMSLGNYVLSAGDLASICIADAVSRLLPGFLGADESLLDESHNHPDILEYPQFTKPSEYNGWKVPDVLLSGNHASILAWREQNRKKIERGNYESTFKRSADSGC</sequence>
<keyword id="KW-0963">Cytoplasm</keyword>
<keyword id="KW-0489">Methyltransferase</keyword>
<keyword id="KW-0949">S-adenosyl-L-methionine</keyword>
<keyword id="KW-0808">Transferase</keyword>
<keyword id="KW-0819">tRNA processing</keyword>
<feature type="chain" id="PRO_0000060400" description="tRNA (guanine-N(1)-)-methyltransferase">
    <location>
        <begin position="1"/>
        <end position="231"/>
    </location>
</feature>
<feature type="binding site" evidence="1">
    <location>
        <position position="111"/>
    </location>
    <ligand>
        <name>S-adenosyl-L-methionine</name>
        <dbReference type="ChEBI" id="CHEBI:59789"/>
    </ligand>
</feature>
<feature type="binding site" evidence="1">
    <location>
        <begin position="131"/>
        <end position="136"/>
    </location>
    <ligand>
        <name>S-adenosyl-L-methionine</name>
        <dbReference type="ChEBI" id="CHEBI:59789"/>
    </ligand>
</feature>